<organismHost>
    <name type="scientific">Acanthamoeba polyphaga</name>
    <name type="common">Amoeba</name>
    <dbReference type="NCBI Taxonomy" id="5757"/>
</organismHost>
<sequence>MGNICCVKCEMCHQKYSRKKIHSKKICYKCLLVPVNQINNSPSNNSIHKMNYKKNHEMNHEANHVSHIINTNDTDWYVQRNKRKYHPNPSDSRYGSRCFSAGLPVGFG</sequence>
<gene>
    <name type="ordered locus">MIMI_L806</name>
</gene>
<accession>Q5UQI5</accession>
<dbReference type="EMBL" id="AY653733">
    <property type="protein sequence ID" value="AAV51066.1"/>
    <property type="molecule type" value="Genomic_DNA"/>
</dbReference>
<dbReference type="KEGG" id="vg:9925468"/>
<dbReference type="Proteomes" id="UP000001134">
    <property type="component" value="Genome"/>
</dbReference>
<keyword id="KW-0449">Lipoprotein</keyword>
<keyword id="KW-0519">Myristate</keyword>
<keyword id="KW-1185">Reference proteome</keyword>
<organism>
    <name type="scientific">Acanthamoeba polyphaga mimivirus</name>
    <name type="common">APMV</name>
    <dbReference type="NCBI Taxonomy" id="212035"/>
    <lineage>
        <taxon>Viruses</taxon>
        <taxon>Varidnaviria</taxon>
        <taxon>Bamfordvirae</taxon>
        <taxon>Nucleocytoviricota</taxon>
        <taxon>Megaviricetes</taxon>
        <taxon>Imitervirales</taxon>
        <taxon>Mimiviridae</taxon>
        <taxon>Megamimivirinae</taxon>
        <taxon>Mimivirus</taxon>
        <taxon>Mimivirus bradfordmassiliense</taxon>
    </lineage>
</organism>
<feature type="initiator methionine" description="Removed" evidence="1">
    <location>
        <position position="1"/>
    </location>
</feature>
<feature type="chain" id="PRO_0000071360" description="Uncharacterized protein L806">
    <location>
        <begin position="2"/>
        <end position="108"/>
    </location>
</feature>
<feature type="lipid moiety-binding region" description="N-myristoyl glycine; by host" evidence="1">
    <location>
        <position position="2"/>
    </location>
</feature>
<proteinExistence type="inferred from homology"/>
<evidence type="ECO:0000255" key="1"/>
<name>YL806_MIMIV</name>
<reference key="1">
    <citation type="journal article" date="2004" name="Science">
        <title>The 1.2-megabase genome sequence of Mimivirus.</title>
        <authorList>
            <person name="Raoult D."/>
            <person name="Audic S."/>
            <person name="Robert C."/>
            <person name="Abergel C."/>
            <person name="Renesto P."/>
            <person name="Ogata H."/>
            <person name="La Scola B."/>
            <person name="Susan M."/>
            <person name="Claverie J.-M."/>
        </authorList>
    </citation>
    <scope>NUCLEOTIDE SEQUENCE [LARGE SCALE GENOMIC DNA]</scope>
    <source>
        <strain>Rowbotham-Bradford</strain>
    </source>
</reference>
<protein>
    <recommendedName>
        <fullName>Uncharacterized protein L806</fullName>
    </recommendedName>
</protein>